<evidence type="ECO:0000250" key="1">
    <source>
        <dbReference type="UniProtKB" id="Q16478"/>
    </source>
</evidence>
<evidence type="ECO:0000250" key="2">
    <source>
        <dbReference type="UniProtKB" id="Q63273"/>
    </source>
</evidence>
<evidence type="ECO:0000255" key="3"/>
<evidence type="ECO:0000256" key="4">
    <source>
        <dbReference type="SAM" id="MobiDB-lite"/>
    </source>
</evidence>
<evidence type="ECO:0000269" key="5">
    <source>
    </source>
</evidence>
<evidence type="ECO:0000269" key="6">
    <source>
    </source>
</evidence>
<evidence type="ECO:0000305" key="7"/>
<sequence>MPAELLLLLIVAFANPSCQVLSSLRMAAILDDQTVCGRGERLALALAREQINGIIEVPAKARVEVDIFELQRDSQYETTDTMCQILPKGVVSVLGPSSSPASASTVSHICGEKEIPHIKVGPEETPRLQYLRFASVSLYPSNEDVSLAVSRILKSFNYPSASLICAKAECLLRLEELVRGFLISKETLSVRMLDDSRDPTPLLKEIRDDKVSTIIIDANASISHLVLRKASELGMTSAFYKYILTTMDFPILHLDGIVEDSSNILGFSMFNTSHPFYPEFVRSLNMSWRENCEASTYPGPALSAALMFDAVHVVVSAVRELNRSQEIGVKPLACTSANIWPHGTSLMNYLRMVEYDGLTGRVEFNSKGQRTNYTLRILEKSRQGHREIGVWYSNRTLAMNATTLDINLSQTLANKTLVVTTILENPYVMRRPNFQALSGNERFEGFCVDMLRELAELLRFRYRLRLVEDGLYGAPEPNGSWTGMVGELINRKADLAVAAFTITAEREKVIDFSKPFMTLGISILYRVHMGRKPGYFSFLDPFSPAVWLFMLLAYLAVSCVLFLAARLSPYEWYNPHPCLRARPHILENQYTLGNSLWFPVGGFMQQGSEIMPRALSTRCVSGVWWAFTLIIISSYTANLAAFLTVQRMEVPVESADDLADQTNIEYGTIHAGSTMTFFQNSRYQTYQRMWNYMQSKQPSVFVKSTEEGIARVLNSRYAFLLESTMNEYHRRLNCNLTQIGGLLDTKGYGIGMPLGSPFRDEITLAILQLQENNRLEILKRKWWEGGRCPKEEDHRAKGLGMENIGGIFVVLICGLIIAVFVAVMEFIWSTRRSAESEEVSVCQEMLQELRHAVSCRKTSRSRRRRRPGGPSRALLSLRAVREMRLSNGKLYSAGAGGDAGAHGGPQRLLDDPGPPGGPRPQAPTPCTHVRVCQECRRIQALRASGAGAPPRGLGTPAEATSPPRPRPGPTGPRELTEHE</sequence>
<comment type="function">
    <text evidence="2 6">Ionotropic glutamate receptor that functions as a cation-permeable ligand-gated ion channel, gated by L-glutamate and the glutamatergic agonist kainic acid. Cannot form functional channels on its own and produces channel activity only in heteromeric assembly with GRIK2 subunit (PubMed:1310861). Can form functional heteromeric receptors with GRIK1 and GRIK3 (By similarity).</text>
</comment>
<comment type="subunit">
    <text evidence="2 5">Homotetramer. Heterotetramer with GRIK2. Can form functional heteromeric receptors with GRIK1, GRIK2 and GRIK3 (By similarity). Forms a heteromeric complex with GRIK2 (PubMed:12954862).</text>
</comment>
<comment type="subcellular location">
    <subcellularLocation>
        <location evidence="5">Cell membrane</location>
        <topology evidence="3">Multi-pass membrane protein</topology>
    </subcellularLocation>
    <subcellularLocation>
        <location evidence="5">Postsynaptic cell membrane</location>
        <topology evidence="3">Multi-pass membrane protein</topology>
    </subcellularLocation>
    <subcellularLocation>
        <location evidence="5">Presynaptic cell membrane</location>
        <topology evidence="3">Multi-pass membrane protein</topology>
    </subcellularLocation>
    <text evidence="1">Association with GRIK2 is required for its cell membrane localization and channel activity.</text>
</comment>
<comment type="tissue specificity">
    <text evidence="5">Expressed in the hippocampal mossy fiber synapses (at protein level).</text>
</comment>
<comment type="similarity">
    <text evidence="7">Belongs to the glutamate-gated ion channel (TC 1.A.10.1) family. GRIK5 subfamily.</text>
</comment>
<organism>
    <name type="scientific">Mus musculus</name>
    <name type="common">Mouse</name>
    <dbReference type="NCBI Taxonomy" id="10090"/>
    <lineage>
        <taxon>Eukaryota</taxon>
        <taxon>Metazoa</taxon>
        <taxon>Chordata</taxon>
        <taxon>Craniata</taxon>
        <taxon>Vertebrata</taxon>
        <taxon>Euteleostomi</taxon>
        <taxon>Mammalia</taxon>
        <taxon>Eutheria</taxon>
        <taxon>Euarchontoglires</taxon>
        <taxon>Glires</taxon>
        <taxon>Rodentia</taxon>
        <taxon>Myomorpha</taxon>
        <taxon>Muroidea</taxon>
        <taxon>Muridae</taxon>
        <taxon>Murinae</taxon>
        <taxon>Mus</taxon>
        <taxon>Mus</taxon>
    </lineage>
</organism>
<dbReference type="EMBL" id="D10011">
    <property type="protein sequence ID" value="BAA00899.1"/>
    <property type="molecule type" value="mRNA"/>
</dbReference>
<dbReference type="EMBL" id="AC125468">
    <property type="status" value="NOT_ANNOTATED_CDS"/>
    <property type="molecule type" value="Genomic_DNA"/>
</dbReference>
<dbReference type="EMBL" id="CH466593">
    <property type="protein sequence ID" value="EDL24295.1"/>
    <property type="molecule type" value="Genomic_DNA"/>
</dbReference>
<dbReference type="CCDS" id="CCDS20970.1"/>
<dbReference type="PIR" id="JH0589">
    <property type="entry name" value="JH0589"/>
</dbReference>
<dbReference type="RefSeq" id="NP_032194.2">
    <property type="nucleotide sequence ID" value="NM_008168.3"/>
</dbReference>
<dbReference type="SMR" id="Q61626"/>
<dbReference type="BioGRID" id="200066">
    <property type="interactions" value="2"/>
</dbReference>
<dbReference type="CORUM" id="Q61626"/>
<dbReference type="FunCoup" id="Q61626">
    <property type="interactions" value="476"/>
</dbReference>
<dbReference type="IntAct" id="Q61626">
    <property type="interactions" value="1"/>
</dbReference>
<dbReference type="STRING" id="10090.ENSMUSP00000003468"/>
<dbReference type="GlyCosmos" id="Q61626">
    <property type="glycosylation" value="11 sites, No reported glycans"/>
</dbReference>
<dbReference type="GlyGen" id="Q61626">
    <property type="glycosylation" value="14 sites, 7 N-linked glycans (8 sites), 1 O-linked glycan (1 site)"/>
</dbReference>
<dbReference type="iPTMnet" id="Q61626"/>
<dbReference type="PhosphoSitePlus" id="Q61626"/>
<dbReference type="SwissPalm" id="Q61626"/>
<dbReference type="PaxDb" id="10090-ENSMUSP00000003468"/>
<dbReference type="ProteomicsDB" id="271089"/>
<dbReference type="ABCD" id="Q61626">
    <property type="antibodies" value="1 sequenced antibody"/>
</dbReference>
<dbReference type="Antibodypedia" id="30879">
    <property type="antibodies" value="226 antibodies from 33 providers"/>
</dbReference>
<dbReference type="DNASU" id="14809"/>
<dbReference type="Ensembl" id="ENSMUST00000003468.10">
    <property type="protein sequence ID" value="ENSMUSP00000003468.9"/>
    <property type="gene ID" value="ENSMUSG00000003378.10"/>
</dbReference>
<dbReference type="GeneID" id="14809"/>
<dbReference type="KEGG" id="mmu:14809"/>
<dbReference type="UCSC" id="uc009frh.2">
    <property type="organism name" value="mouse"/>
</dbReference>
<dbReference type="AGR" id="MGI:95818"/>
<dbReference type="CTD" id="2901"/>
<dbReference type="MGI" id="MGI:95818">
    <property type="gene designation" value="Grik5"/>
</dbReference>
<dbReference type="VEuPathDB" id="HostDB:ENSMUSG00000003378"/>
<dbReference type="eggNOG" id="KOG1052">
    <property type="taxonomic scope" value="Eukaryota"/>
</dbReference>
<dbReference type="GeneTree" id="ENSGT00940000158852"/>
<dbReference type="HOGENOM" id="CLU_007257_1_0_1"/>
<dbReference type="InParanoid" id="Q61626"/>
<dbReference type="OMA" id="ENCEASM"/>
<dbReference type="OrthoDB" id="5984008at2759"/>
<dbReference type="PhylomeDB" id="Q61626"/>
<dbReference type="TreeFam" id="TF334668"/>
<dbReference type="Reactome" id="R-MMU-451308">
    <property type="pathway name" value="Activation of Ca-permeable Kainate Receptor"/>
</dbReference>
<dbReference type="BioGRID-ORCS" id="14809">
    <property type="hits" value="2 hits in 78 CRISPR screens"/>
</dbReference>
<dbReference type="ChiTaRS" id="Grik5">
    <property type="organism name" value="mouse"/>
</dbReference>
<dbReference type="PRO" id="PR:Q61626"/>
<dbReference type="Proteomes" id="UP000000589">
    <property type="component" value="Chromosome 7"/>
</dbReference>
<dbReference type="RNAct" id="Q61626">
    <property type="molecule type" value="protein"/>
</dbReference>
<dbReference type="Bgee" id="ENSMUSG00000003378">
    <property type="expression patterns" value="Expressed in superior frontal gyrus and 171 other cell types or tissues"/>
</dbReference>
<dbReference type="ExpressionAtlas" id="Q61626">
    <property type="expression patterns" value="baseline and differential"/>
</dbReference>
<dbReference type="GO" id="GO:0042995">
    <property type="term" value="C:cell projection"/>
    <property type="evidence" value="ECO:0007669"/>
    <property type="project" value="UniProtKB-KW"/>
</dbReference>
<dbReference type="GO" id="GO:0005783">
    <property type="term" value="C:endoplasmic reticulum"/>
    <property type="evidence" value="ECO:0000314"/>
    <property type="project" value="MGI"/>
</dbReference>
<dbReference type="GO" id="GO:0098686">
    <property type="term" value="C:hippocampal mossy fiber to CA3 synapse"/>
    <property type="evidence" value="ECO:0000314"/>
    <property type="project" value="SynGO"/>
</dbReference>
<dbReference type="GO" id="GO:0032983">
    <property type="term" value="C:kainate selective glutamate receptor complex"/>
    <property type="evidence" value="ECO:0000353"/>
    <property type="project" value="MGI"/>
</dbReference>
<dbReference type="GO" id="GO:0016020">
    <property type="term" value="C:membrane"/>
    <property type="evidence" value="ECO:0000314"/>
    <property type="project" value="MGI"/>
</dbReference>
<dbReference type="GO" id="GO:0005654">
    <property type="term" value="C:nucleoplasm"/>
    <property type="evidence" value="ECO:0007669"/>
    <property type="project" value="Ensembl"/>
</dbReference>
<dbReference type="GO" id="GO:0098839">
    <property type="term" value="C:postsynaptic density membrane"/>
    <property type="evidence" value="ECO:0000314"/>
    <property type="project" value="SynGO"/>
</dbReference>
<dbReference type="GO" id="GO:0045211">
    <property type="term" value="C:postsynaptic membrane"/>
    <property type="evidence" value="ECO:0000314"/>
    <property type="project" value="MGI"/>
</dbReference>
<dbReference type="GO" id="GO:0042734">
    <property type="term" value="C:presynaptic membrane"/>
    <property type="evidence" value="ECO:0000314"/>
    <property type="project" value="MGI"/>
</dbReference>
<dbReference type="GO" id="GO:0015277">
    <property type="term" value="F:kainate selective glutamate receptor activity"/>
    <property type="evidence" value="ECO:0000316"/>
    <property type="project" value="MGI"/>
</dbReference>
<dbReference type="GO" id="GO:0099507">
    <property type="term" value="F:ligand-gated monoatomic ion channel activity involved in regulation of presynaptic membrane potential"/>
    <property type="evidence" value="ECO:0007669"/>
    <property type="project" value="Ensembl"/>
</dbReference>
<dbReference type="GO" id="GO:1904315">
    <property type="term" value="F:transmitter-gated monoatomic ion channel activity involved in regulation of postsynaptic membrane potential"/>
    <property type="evidence" value="ECO:0000314"/>
    <property type="project" value="SynGO"/>
</dbReference>
<dbReference type="GO" id="GO:0060079">
    <property type="term" value="P:excitatory postsynaptic potential"/>
    <property type="evidence" value="ECO:0000315"/>
    <property type="project" value="MGI"/>
</dbReference>
<dbReference type="GO" id="GO:0042391">
    <property type="term" value="P:regulation of membrane potential"/>
    <property type="evidence" value="ECO:0000316"/>
    <property type="project" value="MGI"/>
</dbReference>
<dbReference type="GO" id="GO:0031630">
    <property type="term" value="P:regulation of synaptic vesicle fusion to presynaptic active zone membrane"/>
    <property type="evidence" value="ECO:0000315"/>
    <property type="project" value="MGI"/>
</dbReference>
<dbReference type="GO" id="GO:0035249">
    <property type="term" value="P:synaptic transmission, glutamatergic"/>
    <property type="evidence" value="ECO:0000315"/>
    <property type="project" value="MGI"/>
</dbReference>
<dbReference type="CDD" id="cd06394">
    <property type="entry name" value="PBP1_iGluR_Kainate_KA1_2"/>
    <property type="match status" value="1"/>
</dbReference>
<dbReference type="FunFam" id="3.40.190.10:FF:000060">
    <property type="entry name" value="Glutamate receptor ionotropic, kainate 1"/>
    <property type="match status" value="1"/>
</dbReference>
<dbReference type="FunFam" id="3.40.190.10:FF:000072">
    <property type="entry name" value="glutamate receptor ionotropic, kainate 4"/>
    <property type="match status" value="1"/>
</dbReference>
<dbReference type="FunFam" id="3.40.50.2300:FF:000059">
    <property type="entry name" value="Glutamate receptor, ionotropic, kainate 4"/>
    <property type="match status" value="1"/>
</dbReference>
<dbReference type="FunFam" id="1.10.287.70:FF:000010">
    <property type="entry name" value="Putative glutamate receptor ionotropic kainate 1"/>
    <property type="match status" value="1"/>
</dbReference>
<dbReference type="Gene3D" id="1.10.287.70">
    <property type="match status" value="1"/>
</dbReference>
<dbReference type="Gene3D" id="3.40.50.2300">
    <property type="match status" value="2"/>
</dbReference>
<dbReference type="Gene3D" id="3.40.190.10">
    <property type="entry name" value="Periplasmic binding protein-like II"/>
    <property type="match status" value="1"/>
</dbReference>
<dbReference type="InterPro" id="IPR001828">
    <property type="entry name" value="ANF_lig-bd_rcpt"/>
</dbReference>
<dbReference type="InterPro" id="IPR019594">
    <property type="entry name" value="Glu/Gly-bd"/>
</dbReference>
<dbReference type="InterPro" id="IPR001508">
    <property type="entry name" value="Iono_Glu_rcpt_met"/>
</dbReference>
<dbReference type="InterPro" id="IPR015683">
    <property type="entry name" value="Ionotropic_Glu_rcpt"/>
</dbReference>
<dbReference type="InterPro" id="IPR001320">
    <property type="entry name" value="Iontro_rcpt_C"/>
</dbReference>
<dbReference type="InterPro" id="IPR028082">
    <property type="entry name" value="Peripla_BP_I"/>
</dbReference>
<dbReference type="PANTHER" id="PTHR18966">
    <property type="entry name" value="IONOTROPIC GLUTAMATE RECEPTOR"/>
    <property type="match status" value="1"/>
</dbReference>
<dbReference type="Pfam" id="PF01094">
    <property type="entry name" value="ANF_receptor"/>
    <property type="match status" value="1"/>
</dbReference>
<dbReference type="Pfam" id="PF00060">
    <property type="entry name" value="Lig_chan"/>
    <property type="match status" value="1"/>
</dbReference>
<dbReference type="Pfam" id="PF10613">
    <property type="entry name" value="Lig_chan-Glu_bd"/>
    <property type="match status" value="1"/>
</dbReference>
<dbReference type="PRINTS" id="PR00177">
    <property type="entry name" value="NMDARECEPTOR"/>
</dbReference>
<dbReference type="SMART" id="SM00918">
    <property type="entry name" value="Lig_chan-Glu_bd"/>
    <property type="match status" value="1"/>
</dbReference>
<dbReference type="SMART" id="SM00079">
    <property type="entry name" value="PBPe"/>
    <property type="match status" value="1"/>
</dbReference>
<dbReference type="SUPFAM" id="SSF53822">
    <property type="entry name" value="Periplasmic binding protein-like I"/>
    <property type="match status" value="1"/>
</dbReference>
<dbReference type="SUPFAM" id="SSF53850">
    <property type="entry name" value="Periplasmic binding protein-like II"/>
    <property type="match status" value="1"/>
</dbReference>
<keyword id="KW-1003">Cell membrane</keyword>
<keyword id="KW-0966">Cell projection</keyword>
<keyword id="KW-1015">Disulfide bond</keyword>
<keyword id="KW-0325">Glycoprotein</keyword>
<keyword id="KW-0407">Ion channel</keyword>
<keyword id="KW-0406">Ion transport</keyword>
<keyword id="KW-1071">Ligand-gated ion channel</keyword>
<keyword id="KW-0472">Membrane</keyword>
<keyword id="KW-0628">Postsynaptic cell membrane</keyword>
<keyword id="KW-0675">Receptor</keyword>
<keyword id="KW-1185">Reference proteome</keyword>
<keyword id="KW-0732">Signal</keyword>
<keyword id="KW-0770">Synapse</keyword>
<keyword id="KW-0812">Transmembrane</keyword>
<keyword id="KW-1133">Transmembrane helix</keyword>
<keyword id="KW-0813">Transport</keyword>
<reference key="1">
    <citation type="journal article" date="1992" name="Neuron">
        <title>Primary structure and expression of the gamma 2 subunit of the glutamate receptor channel selective for kainate.</title>
        <authorList>
            <person name="Sakimura K."/>
            <person name="Morita T."/>
            <person name="Kushiya E."/>
            <person name="Mishina M."/>
        </authorList>
    </citation>
    <scope>NUCLEOTIDE SEQUENCE [MRNA]</scope>
    <scope>FUNCTION</scope>
    <source>
        <tissue>Forebrain</tissue>
    </source>
</reference>
<reference key="2">
    <citation type="journal article" date="2009" name="PLoS Biol.">
        <title>Lineage-specific biology revealed by a finished genome assembly of the mouse.</title>
        <authorList>
            <person name="Church D.M."/>
            <person name="Goodstadt L."/>
            <person name="Hillier L.W."/>
            <person name="Zody M.C."/>
            <person name="Goldstein S."/>
            <person name="She X."/>
            <person name="Bult C.J."/>
            <person name="Agarwala R."/>
            <person name="Cherry J.L."/>
            <person name="DiCuccio M."/>
            <person name="Hlavina W."/>
            <person name="Kapustin Y."/>
            <person name="Meric P."/>
            <person name="Maglott D."/>
            <person name="Birtle Z."/>
            <person name="Marques A.C."/>
            <person name="Graves T."/>
            <person name="Zhou S."/>
            <person name="Teague B."/>
            <person name="Potamousis K."/>
            <person name="Churas C."/>
            <person name="Place M."/>
            <person name="Herschleb J."/>
            <person name="Runnheim R."/>
            <person name="Forrest D."/>
            <person name="Amos-Landgraf J."/>
            <person name="Schwartz D.C."/>
            <person name="Cheng Z."/>
            <person name="Lindblad-Toh K."/>
            <person name="Eichler E.E."/>
            <person name="Ponting C.P."/>
        </authorList>
    </citation>
    <scope>NUCLEOTIDE SEQUENCE [LARGE SCALE GENOMIC DNA]</scope>
    <source>
        <strain>C57BL/6J</strain>
    </source>
</reference>
<reference key="3">
    <citation type="submission" date="2005-07" db="EMBL/GenBank/DDBJ databases">
        <authorList>
            <person name="Mural R.J."/>
            <person name="Adams M.D."/>
            <person name="Myers E.W."/>
            <person name="Smith H.O."/>
            <person name="Venter J.C."/>
        </authorList>
    </citation>
    <scope>NUCLEOTIDE SEQUENCE [LARGE SCALE GENOMIC DNA]</scope>
</reference>
<reference key="4">
    <citation type="journal article" date="2003" name="J. Neurosci.">
        <title>Distribution of kainate receptor subunits at hippocampal mossy fiber synapses.</title>
        <authorList>
            <person name="Darstein M."/>
            <person name="Petralia R.S."/>
            <person name="Swanson G.T."/>
            <person name="Wenthold R.J."/>
            <person name="Heinemann S.F."/>
        </authorList>
    </citation>
    <scope>SUBUNIT</scope>
    <scope>SUBCELLULAR LOCATION</scope>
    <scope>TISSUE SPECIFICITY</scope>
</reference>
<feature type="signal peptide" evidence="3">
    <location>
        <begin position="1"/>
        <end position="14"/>
    </location>
</feature>
<feature type="chain" id="PRO_0000011553" description="Glutamate receptor ionotropic, kainate 5">
    <location>
        <begin position="15"/>
        <end position="979"/>
    </location>
</feature>
<feature type="topological domain" description="Extracellular" evidence="3">
    <location>
        <begin position="15"/>
        <end position="544"/>
    </location>
</feature>
<feature type="transmembrane region" description="Helical" evidence="3">
    <location>
        <begin position="545"/>
        <end position="565"/>
    </location>
</feature>
<feature type="topological domain" description="Cytoplasmic" evidence="3">
    <location>
        <begin position="566"/>
        <end position="622"/>
    </location>
</feature>
<feature type="transmembrane region" description="Helical" evidence="3">
    <location>
        <begin position="623"/>
        <end position="643"/>
    </location>
</feature>
<feature type="topological domain" description="Extracellular" evidence="3">
    <location>
        <begin position="644"/>
        <end position="803"/>
    </location>
</feature>
<feature type="transmembrane region" description="Helical" evidence="3">
    <location>
        <begin position="804"/>
        <end position="824"/>
    </location>
</feature>
<feature type="topological domain" description="Cytoplasmic" evidence="3">
    <location>
        <begin position="825"/>
        <end position="979"/>
    </location>
</feature>
<feature type="region of interest" description="Disordered" evidence="4">
    <location>
        <begin position="856"/>
        <end position="875"/>
    </location>
</feature>
<feature type="region of interest" description="Disordered" evidence="4">
    <location>
        <begin position="890"/>
        <end position="925"/>
    </location>
</feature>
<feature type="region of interest" description="Disordered" evidence="4">
    <location>
        <begin position="942"/>
        <end position="979"/>
    </location>
</feature>
<feature type="compositionally biased region" description="Basic residues" evidence="4">
    <location>
        <begin position="856"/>
        <end position="867"/>
    </location>
</feature>
<feature type="compositionally biased region" description="Gly residues" evidence="4">
    <location>
        <begin position="894"/>
        <end position="903"/>
    </location>
</feature>
<feature type="compositionally biased region" description="Pro residues" evidence="4">
    <location>
        <begin position="912"/>
        <end position="923"/>
    </location>
</feature>
<feature type="glycosylation site" description="N-linked (GlcNAc...) asparagine" evidence="3">
    <location>
        <position position="219"/>
    </location>
</feature>
<feature type="glycosylation site" description="N-linked (GlcNAc...) asparagine" evidence="3">
    <location>
        <position position="271"/>
    </location>
</feature>
<feature type="glycosylation site" description="N-linked (GlcNAc...) asparagine" evidence="3">
    <location>
        <position position="285"/>
    </location>
</feature>
<feature type="glycosylation site" description="N-linked (GlcNAc...) asparagine" evidence="3">
    <location>
        <position position="322"/>
    </location>
</feature>
<feature type="glycosylation site" description="N-linked (GlcNAc...) asparagine" evidence="3">
    <location>
        <position position="372"/>
    </location>
</feature>
<feature type="glycosylation site" description="N-linked (GlcNAc...) asparagine" evidence="3">
    <location>
        <position position="394"/>
    </location>
</feature>
<feature type="glycosylation site" description="N-linked (GlcNAc...) asparagine" evidence="3">
    <location>
        <position position="400"/>
    </location>
</feature>
<feature type="glycosylation site" description="N-linked (GlcNAc...) asparagine" evidence="3">
    <location>
        <position position="407"/>
    </location>
</feature>
<feature type="glycosylation site" description="N-linked (GlcNAc...) asparagine" evidence="3">
    <location>
        <position position="414"/>
    </location>
</feature>
<feature type="glycosylation site" description="N-linked (GlcNAc...) asparagine" evidence="3">
    <location>
        <position position="478"/>
    </location>
</feature>
<feature type="glycosylation site" description="N-linked (GlcNAc...) asparagine" evidence="3">
    <location>
        <position position="735"/>
    </location>
</feature>
<feature type="disulfide bond" evidence="2">
    <location>
        <begin position="36"/>
        <end position="292"/>
    </location>
</feature>
<feature type="disulfide bond" evidence="2">
    <location>
        <begin position="83"/>
        <end position="334"/>
    </location>
</feature>
<feature type="disulfide bond" evidence="2">
    <location>
        <begin position="165"/>
        <end position="170"/>
    </location>
</feature>
<feature type="sequence conflict" description="In Ref. 1; BAA00899." evidence="7" ref="1">
    <original>I</original>
    <variation>V</variation>
    <location>
        <position position="610"/>
    </location>
</feature>
<protein>
    <recommendedName>
        <fullName>Glutamate receptor ionotropic, kainate 5</fullName>
        <shortName>GluK5</shortName>
    </recommendedName>
    <alternativeName>
        <fullName>Glutamate receptor KA-2</fullName>
        <shortName>KA2</shortName>
    </alternativeName>
    <alternativeName>
        <fullName>Glutamate receptor gamma-2</fullName>
        <shortName>GluR gamma-2</shortName>
    </alternativeName>
</protein>
<gene>
    <name type="primary">Grik5</name>
</gene>
<proteinExistence type="evidence at protein level"/>
<accession>Q61626</accession>
<accession>G5E822</accession>
<name>GRIK5_MOUSE</name>